<sequence length="78" mass="8532">MKTLLLTLVVVTIVCLDFGYTIVCYKRHASDSQTTTCLSGICYKKITRGSSRPEMGCGCPQSSRGVKVDCCMRDKCNG</sequence>
<organism>
    <name type="scientific">Micrurus corallinus</name>
    <name type="common">Brazilian coral snake</name>
    <dbReference type="NCBI Taxonomy" id="54390"/>
    <lineage>
        <taxon>Eukaryota</taxon>
        <taxon>Metazoa</taxon>
        <taxon>Chordata</taxon>
        <taxon>Craniata</taxon>
        <taxon>Vertebrata</taxon>
        <taxon>Euteleostomi</taxon>
        <taxon>Lepidosauria</taxon>
        <taxon>Squamata</taxon>
        <taxon>Bifurcata</taxon>
        <taxon>Unidentata</taxon>
        <taxon>Episquamata</taxon>
        <taxon>Toxicofera</taxon>
        <taxon>Serpentes</taxon>
        <taxon>Colubroidea</taxon>
        <taxon>Elapidae</taxon>
        <taxon>Elapinae</taxon>
        <taxon>Micrurus</taxon>
    </lineage>
</organism>
<keyword id="KW-0903">Direct protein sequencing</keyword>
<keyword id="KW-1015">Disulfide bond</keyword>
<keyword id="KW-0964">Secreted</keyword>
<keyword id="KW-0732">Signal</keyword>
<keyword id="KW-0800">Toxin</keyword>
<name>3SOC7_MICCO</name>
<protein>
    <recommendedName>
        <fullName evidence="3">Alpha-neurotoxin homolog 7</fullName>
        <shortName evidence="3">NXH7</shortName>
    </recommendedName>
    <alternativeName>
        <fullName evidence="3">Alpha-neurotoxin homolog 3</fullName>
        <shortName evidence="3">NXH3</shortName>
    </alternativeName>
</protein>
<reference key="1">
    <citation type="journal article" date="1995" name="J. Toxicol. Toxin Rev.">
        <title>Reverse biology applied to Micrurus corallinus, a South American coral snake.</title>
        <authorList>
            <person name="Ho P.L."/>
            <person name="Soares M.B."/>
            <person name="Yamane T."/>
            <person name="Raw I."/>
        </authorList>
    </citation>
    <scope>NUCLEOTIDE SEQUENCE [MRNA]</scope>
    <source>
        <tissue>Venom gland</tissue>
    </source>
</reference>
<reference key="2">
    <citation type="journal article" date="2000" name="Biochem. Biophys. Res. Commun.">
        <title>Cloning and characterization of an alpha-neurotoxin-type protein specific for the coral snake Micrurus corallinus.</title>
        <authorList>
            <person name="Silveira de Oliveira J."/>
            <person name="Rossan de Brandao Prieto da Silva A."/>
            <person name="Soares M.B."/>
            <person name="Stephano M.A."/>
            <person name="de Oliveira Dias W."/>
            <person name="Raw I."/>
            <person name="Ho P.L."/>
        </authorList>
    </citation>
    <scope>NUCLEOTIDE SEQUENCE [MRNA]</scope>
    <source>
        <tissue>Venom gland</tissue>
    </source>
</reference>
<reference key="3">
    <citation type="journal article" date="2011" name="J. Proteomics">
        <title>Snake venomics and venom gland transcriptomic analysis of Brazilian coral snakes, Micrurus altirostris and M. corallinus.</title>
        <authorList>
            <person name="Correa-Netto C."/>
            <person name="Junqueira-de-Azevedo Ide L."/>
            <person name="Silva D.A."/>
            <person name="Ho P.L."/>
            <person name="Leitao-de-Araujo M."/>
            <person name="Alves M.L."/>
            <person name="Sanz L."/>
            <person name="Foguel D."/>
            <person name="Zingali R.B."/>
            <person name="Calvete J.J."/>
        </authorList>
    </citation>
    <scope>PROTEIN SEQUENCE OF 22-36</scope>
    <scope>SUBCELLULAR LOCATION</scope>
    <source>
        <tissue>Venom</tissue>
    </source>
</reference>
<feature type="signal peptide" evidence="2">
    <location>
        <begin position="1"/>
        <end position="21"/>
    </location>
</feature>
<feature type="chain" id="PRO_0000035450" description="Alpha-neurotoxin homolog 7" evidence="5">
    <location>
        <begin position="22"/>
        <end position="78"/>
    </location>
</feature>
<feature type="disulfide bond" evidence="1">
    <location>
        <begin position="24"/>
        <end position="42"/>
    </location>
</feature>
<feature type="disulfide bond" evidence="1">
    <location>
        <begin position="37"/>
        <end position="57"/>
    </location>
</feature>
<feature type="disulfide bond" evidence="1">
    <location>
        <begin position="59"/>
        <end position="70"/>
    </location>
</feature>
<feature type="disulfide bond" evidence="1">
    <location>
        <begin position="71"/>
        <end position="76"/>
    </location>
</feature>
<comment type="subcellular location">
    <subcellularLocation>
        <location evidence="2">Secreted</location>
    </subcellularLocation>
</comment>
<comment type="tissue specificity">
    <text evidence="4">Expressed by the venom gland.</text>
</comment>
<comment type="similarity">
    <text evidence="4">Belongs to the three-finger toxin family. Short-chain subfamily. Orphan group XII sub-subfamily.</text>
</comment>
<dbReference type="EMBL" id="AF197565">
    <property type="protein sequence ID" value="AAF13252.1"/>
    <property type="molecule type" value="mRNA"/>
</dbReference>
<dbReference type="EMBL" id="AF197564">
    <property type="protein sequence ID" value="AAF13251.1"/>
    <property type="molecule type" value="mRNA"/>
</dbReference>
<dbReference type="SMR" id="Q9PRI1"/>
<dbReference type="GO" id="GO:0005576">
    <property type="term" value="C:extracellular region"/>
    <property type="evidence" value="ECO:0007669"/>
    <property type="project" value="UniProtKB-SubCell"/>
</dbReference>
<dbReference type="GO" id="GO:0090729">
    <property type="term" value="F:toxin activity"/>
    <property type="evidence" value="ECO:0007669"/>
    <property type="project" value="UniProtKB-KW"/>
</dbReference>
<dbReference type="Gene3D" id="2.10.60.10">
    <property type="entry name" value="CD59"/>
    <property type="match status" value="1"/>
</dbReference>
<dbReference type="InterPro" id="IPR045860">
    <property type="entry name" value="Snake_toxin-like_sf"/>
</dbReference>
<dbReference type="InterPro" id="IPR018354">
    <property type="entry name" value="Snake_toxin_con_site"/>
</dbReference>
<dbReference type="InterPro" id="IPR054131">
    <property type="entry name" value="Toxin_cobra-type"/>
</dbReference>
<dbReference type="Pfam" id="PF21947">
    <property type="entry name" value="Toxin_cobra-type"/>
    <property type="match status" value="1"/>
</dbReference>
<dbReference type="SUPFAM" id="SSF57302">
    <property type="entry name" value="Snake toxin-like"/>
    <property type="match status" value="1"/>
</dbReference>
<dbReference type="PROSITE" id="PS00272">
    <property type="entry name" value="SNAKE_TOXIN"/>
    <property type="match status" value="1"/>
</dbReference>
<evidence type="ECO:0000250" key="1">
    <source>
        <dbReference type="UniProtKB" id="P0C1Z0"/>
    </source>
</evidence>
<evidence type="ECO:0000269" key="2">
    <source>
    </source>
</evidence>
<evidence type="ECO:0000303" key="3">
    <source>
    </source>
</evidence>
<evidence type="ECO:0000305" key="4"/>
<evidence type="ECO:0000305" key="5">
    <source>
    </source>
</evidence>
<proteinExistence type="evidence at protein level"/>
<accession>Q9PRI1</accession>